<protein>
    <recommendedName>
        <fullName>Tubulin gamma-2 chain</fullName>
    </recommendedName>
    <alternativeName>
        <fullName>Gamma-2-tubulin</fullName>
    </alternativeName>
</protein>
<accession>O49068</accession>
<accession>Q0DKL1</accession>
<accession>Q5WMX2</accession>
<accession>Q75M06</accession>
<keyword id="KW-0963">Cytoplasm</keyword>
<keyword id="KW-0206">Cytoskeleton</keyword>
<keyword id="KW-0342">GTP-binding</keyword>
<keyword id="KW-0493">Microtubule</keyword>
<keyword id="KW-0547">Nucleotide-binding</keyword>
<keyword id="KW-1185">Reference proteome</keyword>
<sequence length="469" mass="52870">MPREIITIQVGQCGNQIGMEFWKQLCLEHGIGKDGLLEDFATQGGDRKDVFFYQADDQHYIPRALLVDLEPRVINGIQNSEYRNLYNHENIFVAEHGGGAGNNWASGYHQGEQVVDDIMDMIDREADGSDSLEGFVLCHSIAGGTGSGMGSYLLETLNDRYSKKLVQTYSVFPNQMETSDVVVQPYNSLLTLKRLTLNADCVVVLDNTALNRIAVERLHLANPTFAQTNSLVSTVMSASTTTLRYPGYMNNDLVGLLASLIPTPRCHFLMTGYTPLTVERQVNMIRKTTVLDVMRRLLQTKNIMVSSYARNKEASQAKYISILNIIQGEVDPTQVHESLQRIRERKLVNFIEWGPASIQVALSRKSPYVQTTHRVSGLMLANHTSIRHLFSKCLGQYEKLRKKQAFLDNYRKFPMFEDNDLSEFDESREIIESLVDEYKACESPDYIKWGMEDAGEANVAAALDSKLVV</sequence>
<gene>
    <name type="primary">TUBG2</name>
    <name type="synonym">TUBC</name>
    <name type="ordered locus">Os05g0156600</name>
    <name type="ordered locus">LOC_Os05g06450</name>
    <name type="ORF">P0431G05.16</name>
    <name type="ORF">P0676G05.6</name>
</gene>
<organism>
    <name type="scientific">Oryza sativa subsp. japonica</name>
    <name type="common">Rice</name>
    <dbReference type="NCBI Taxonomy" id="39947"/>
    <lineage>
        <taxon>Eukaryota</taxon>
        <taxon>Viridiplantae</taxon>
        <taxon>Streptophyta</taxon>
        <taxon>Embryophyta</taxon>
        <taxon>Tracheophyta</taxon>
        <taxon>Spermatophyta</taxon>
        <taxon>Magnoliopsida</taxon>
        <taxon>Liliopsida</taxon>
        <taxon>Poales</taxon>
        <taxon>Poaceae</taxon>
        <taxon>BOP clade</taxon>
        <taxon>Oryzoideae</taxon>
        <taxon>Oryzeae</taxon>
        <taxon>Oryzinae</taxon>
        <taxon>Oryza</taxon>
        <taxon>Oryza sativa</taxon>
    </lineage>
</organism>
<evidence type="ECO:0000250" key="1">
    <source>
        <dbReference type="UniProtKB" id="P38557"/>
    </source>
</evidence>
<evidence type="ECO:0000255" key="2"/>
<evidence type="ECO:0000305" key="3"/>
<name>TBG2_ORYSJ</name>
<dbReference type="EMBL" id="AF036957">
    <property type="protein sequence ID" value="AAB92557.1"/>
    <property type="molecule type" value="mRNA"/>
</dbReference>
<dbReference type="EMBL" id="AC087425">
    <property type="protein sequence ID" value="AAS55777.2"/>
    <property type="molecule type" value="Genomic_DNA"/>
</dbReference>
<dbReference type="EMBL" id="AC087551">
    <property type="protein sequence ID" value="AAV32229.1"/>
    <property type="molecule type" value="Genomic_DNA"/>
</dbReference>
<dbReference type="EMBL" id="AP008211">
    <property type="protein sequence ID" value="BAF16612.1"/>
    <property type="molecule type" value="Genomic_DNA"/>
</dbReference>
<dbReference type="EMBL" id="AP014961">
    <property type="protein sequence ID" value="BAS92366.1"/>
    <property type="molecule type" value="Genomic_DNA"/>
</dbReference>
<dbReference type="EMBL" id="AK102557">
    <property type="protein sequence ID" value="BAG95612.1"/>
    <property type="molecule type" value="mRNA"/>
</dbReference>
<dbReference type="RefSeq" id="XP_015639857.1">
    <property type="nucleotide sequence ID" value="XM_015784371.1"/>
</dbReference>
<dbReference type="SMR" id="O49068"/>
<dbReference type="FunCoup" id="O49068">
    <property type="interactions" value="2728"/>
</dbReference>
<dbReference type="STRING" id="39947.O49068"/>
<dbReference type="PaxDb" id="39947-O49068"/>
<dbReference type="EnsemblPlants" id="Os05t0156600-01">
    <property type="protein sequence ID" value="Os05t0156600-01"/>
    <property type="gene ID" value="Os05g0156600"/>
</dbReference>
<dbReference type="Gramene" id="Os05t0156600-01">
    <property type="protein sequence ID" value="Os05t0156600-01"/>
    <property type="gene ID" value="Os05g0156600"/>
</dbReference>
<dbReference type="KEGG" id="dosa:Os05g0156600"/>
<dbReference type="eggNOG" id="KOG1374">
    <property type="taxonomic scope" value="Eukaryota"/>
</dbReference>
<dbReference type="HOGENOM" id="CLU_015718_1_0_1"/>
<dbReference type="InParanoid" id="O49068"/>
<dbReference type="OMA" id="HRYISIL"/>
<dbReference type="OrthoDB" id="10249382at2759"/>
<dbReference type="Proteomes" id="UP000000763">
    <property type="component" value="Chromosome 5"/>
</dbReference>
<dbReference type="Proteomes" id="UP000059680">
    <property type="component" value="Chromosome 5"/>
</dbReference>
<dbReference type="GO" id="GO:0005737">
    <property type="term" value="C:cytoplasm"/>
    <property type="evidence" value="ECO:0007669"/>
    <property type="project" value="UniProtKB-KW"/>
</dbReference>
<dbReference type="GO" id="GO:0000931">
    <property type="term" value="C:gamma-tubulin ring complex"/>
    <property type="evidence" value="ECO:0000318"/>
    <property type="project" value="GO_Central"/>
</dbReference>
<dbReference type="GO" id="GO:0005874">
    <property type="term" value="C:microtubule"/>
    <property type="evidence" value="ECO:0007669"/>
    <property type="project" value="UniProtKB-KW"/>
</dbReference>
<dbReference type="GO" id="GO:0005634">
    <property type="term" value="C:nucleus"/>
    <property type="evidence" value="ECO:0000318"/>
    <property type="project" value="GO_Central"/>
</dbReference>
<dbReference type="GO" id="GO:0005819">
    <property type="term" value="C:spindle"/>
    <property type="evidence" value="ECO:0000318"/>
    <property type="project" value="GO_Central"/>
</dbReference>
<dbReference type="GO" id="GO:0005525">
    <property type="term" value="F:GTP binding"/>
    <property type="evidence" value="ECO:0000318"/>
    <property type="project" value="GO_Central"/>
</dbReference>
<dbReference type="GO" id="GO:0140490">
    <property type="term" value="F:microtubule nucleator activity"/>
    <property type="evidence" value="ECO:0000318"/>
    <property type="project" value="GO_Central"/>
</dbReference>
<dbReference type="GO" id="GO:0031122">
    <property type="term" value="P:cytoplasmic microtubule organization"/>
    <property type="evidence" value="ECO:0007669"/>
    <property type="project" value="InterPro"/>
</dbReference>
<dbReference type="GO" id="GO:0000212">
    <property type="term" value="P:meiotic spindle organization"/>
    <property type="evidence" value="ECO:0000318"/>
    <property type="project" value="GO_Central"/>
</dbReference>
<dbReference type="GO" id="GO:0007020">
    <property type="term" value="P:microtubule nucleation"/>
    <property type="evidence" value="ECO:0000318"/>
    <property type="project" value="GO_Central"/>
</dbReference>
<dbReference type="GO" id="GO:0000278">
    <property type="term" value="P:mitotic cell cycle"/>
    <property type="evidence" value="ECO:0000318"/>
    <property type="project" value="GO_Central"/>
</dbReference>
<dbReference type="GO" id="GO:0000070">
    <property type="term" value="P:mitotic sister chromatid segregation"/>
    <property type="evidence" value="ECO:0000318"/>
    <property type="project" value="GO_Central"/>
</dbReference>
<dbReference type="GO" id="GO:0007052">
    <property type="term" value="P:mitotic spindle organization"/>
    <property type="evidence" value="ECO:0000318"/>
    <property type="project" value="GO_Central"/>
</dbReference>
<dbReference type="CDD" id="cd02188">
    <property type="entry name" value="gamma_tubulin"/>
    <property type="match status" value="1"/>
</dbReference>
<dbReference type="FunFam" id="1.10.287.600:FF:000004">
    <property type="entry name" value="Tubulin gamma chain"/>
    <property type="match status" value="1"/>
</dbReference>
<dbReference type="FunFam" id="3.30.1330.20:FF:000003">
    <property type="entry name" value="Tubulin gamma chain"/>
    <property type="match status" value="1"/>
</dbReference>
<dbReference type="FunFam" id="3.40.50.1440:FF:000010">
    <property type="entry name" value="Tubulin gamma chain"/>
    <property type="match status" value="1"/>
</dbReference>
<dbReference type="Gene3D" id="1.10.287.600">
    <property type="entry name" value="Helix hairpin bin"/>
    <property type="match status" value="1"/>
</dbReference>
<dbReference type="Gene3D" id="3.30.1330.20">
    <property type="entry name" value="Tubulin/FtsZ, C-terminal domain"/>
    <property type="match status" value="1"/>
</dbReference>
<dbReference type="Gene3D" id="3.40.50.1440">
    <property type="entry name" value="Tubulin/FtsZ, GTPase domain"/>
    <property type="match status" value="1"/>
</dbReference>
<dbReference type="InterPro" id="IPR002454">
    <property type="entry name" value="Gamma_tubulin"/>
</dbReference>
<dbReference type="InterPro" id="IPR008280">
    <property type="entry name" value="Tub_FtsZ_C"/>
</dbReference>
<dbReference type="InterPro" id="IPR000217">
    <property type="entry name" value="Tubulin"/>
</dbReference>
<dbReference type="InterPro" id="IPR037103">
    <property type="entry name" value="Tubulin/FtsZ-like_C"/>
</dbReference>
<dbReference type="InterPro" id="IPR018316">
    <property type="entry name" value="Tubulin/FtsZ_2-layer-sand-dom"/>
</dbReference>
<dbReference type="InterPro" id="IPR036525">
    <property type="entry name" value="Tubulin/FtsZ_GTPase_sf"/>
</dbReference>
<dbReference type="InterPro" id="IPR023123">
    <property type="entry name" value="Tubulin_C"/>
</dbReference>
<dbReference type="InterPro" id="IPR017975">
    <property type="entry name" value="Tubulin_CS"/>
</dbReference>
<dbReference type="InterPro" id="IPR003008">
    <property type="entry name" value="Tubulin_FtsZ_GTPase"/>
</dbReference>
<dbReference type="PANTHER" id="PTHR11588">
    <property type="entry name" value="TUBULIN"/>
    <property type="match status" value="1"/>
</dbReference>
<dbReference type="Pfam" id="PF00091">
    <property type="entry name" value="Tubulin"/>
    <property type="match status" value="1"/>
</dbReference>
<dbReference type="Pfam" id="PF03953">
    <property type="entry name" value="Tubulin_C"/>
    <property type="match status" value="1"/>
</dbReference>
<dbReference type="PRINTS" id="PR01164">
    <property type="entry name" value="GAMMATUBULIN"/>
</dbReference>
<dbReference type="PRINTS" id="PR01161">
    <property type="entry name" value="TUBULIN"/>
</dbReference>
<dbReference type="SMART" id="SM00864">
    <property type="entry name" value="Tubulin"/>
    <property type="match status" value="1"/>
</dbReference>
<dbReference type="SMART" id="SM00865">
    <property type="entry name" value="Tubulin_C"/>
    <property type="match status" value="1"/>
</dbReference>
<dbReference type="SUPFAM" id="SSF55307">
    <property type="entry name" value="Tubulin C-terminal domain-like"/>
    <property type="match status" value="1"/>
</dbReference>
<dbReference type="SUPFAM" id="SSF52490">
    <property type="entry name" value="Tubulin nucleotide-binding domain-like"/>
    <property type="match status" value="1"/>
</dbReference>
<dbReference type="PROSITE" id="PS00227">
    <property type="entry name" value="TUBULIN"/>
    <property type="match status" value="1"/>
</dbReference>
<reference key="1">
    <citation type="online journal article" date="1999" name="Plant Gene Register">
        <title>Nucleotide sequence of a cDNA (OstubG2) encoding a gamma-tubulin in the rice plant (Oryza sativa).</title>
        <authorList>
            <person name="Kim Y.-K."/>
            <person name="Cha Y.-K."/>
            <person name="Jun H.-Y."/>
            <person name="Kim J.-D."/>
            <person name="Choi J.-S."/>
            <person name="Kim H.-R."/>
            <person name="Han I.-S."/>
        </authorList>
        <locator>PGR99-186</locator>
    </citation>
    <scope>NUCLEOTIDE SEQUENCE [MRNA]</scope>
    <source>
        <strain>cv. Yeongnambyeo</strain>
    </source>
</reference>
<reference key="2">
    <citation type="journal article" date="2005" name="Mol. Genet. Genomics">
        <title>A fine physical map of the rice chromosome 5.</title>
        <authorList>
            <person name="Cheng C.-H."/>
            <person name="Chung M.C."/>
            <person name="Liu S.-M."/>
            <person name="Chen S.-K."/>
            <person name="Kao F.Y."/>
            <person name="Lin S.-J."/>
            <person name="Hsiao S.-H."/>
            <person name="Tseng I.C."/>
            <person name="Hsing Y.-I.C."/>
            <person name="Wu H.-P."/>
            <person name="Chen C.-S."/>
            <person name="Shaw J.-F."/>
            <person name="Wu J."/>
            <person name="Matsumoto T."/>
            <person name="Sasaki T."/>
            <person name="Chen H.-C."/>
            <person name="Chow T.-Y."/>
        </authorList>
    </citation>
    <scope>NUCLEOTIDE SEQUENCE [LARGE SCALE GENOMIC DNA]</scope>
    <source>
        <strain>cv. Nipponbare</strain>
    </source>
</reference>
<reference key="3">
    <citation type="journal article" date="2005" name="Nature">
        <title>The map-based sequence of the rice genome.</title>
        <authorList>
            <consortium name="International rice genome sequencing project (IRGSP)"/>
        </authorList>
    </citation>
    <scope>NUCLEOTIDE SEQUENCE [LARGE SCALE GENOMIC DNA]</scope>
    <source>
        <strain>cv. Nipponbare</strain>
    </source>
</reference>
<reference key="4">
    <citation type="journal article" date="2008" name="Nucleic Acids Res.">
        <title>The rice annotation project database (RAP-DB): 2008 update.</title>
        <authorList>
            <consortium name="The rice annotation project (RAP)"/>
        </authorList>
    </citation>
    <scope>GENOME REANNOTATION</scope>
    <source>
        <strain>cv. Nipponbare</strain>
    </source>
</reference>
<reference key="5">
    <citation type="journal article" date="2013" name="Rice">
        <title>Improvement of the Oryza sativa Nipponbare reference genome using next generation sequence and optical map data.</title>
        <authorList>
            <person name="Kawahara Y."/>
            <person name="de la Bastide M."/>
            <person name="Hamilton J.P."/>
            <person name="Kanamori H."/>
            <person name="McCombie W.R."/>
            <person name="Ouyang S."/>
            <person name="Schwartz D.C."/>
            <person name="Tanaka T."/>
            <person name="Wu J."/>
            <person name="Zhou S."/>
            <person name="Childs K.L."/>
            <person name="Davidson R.M."/>
            <person name="Lin H."/>
            <person name="Quesada-Ocampo L."/>
            <person name="Vaillancourt B."/>
            <person name="Sakai H."/>
            <person name="Lee S.S."/>
            <person name="Kim J."/>
            <person name="Numa H."/>
            <person name="Itoh T."/>
            <person name="Buell C.R."/>
            <person name="Matsumoto T."/>
        </authorList>
    </citation>
    <scope>GENOME REANNOTATION</scope>
    <source>
        <strain>cv. Nipponbare</strain>
    </source>
</reference>
<reference key="6">
    <citation type="journal article" date="2003" name="Science">
        <title>Collection, mapping, and annotation of over 28,000 cDNA clones from japonica rice.</title>
        <authorList>
            <consortium name="The rice full-length cDNA consortium"/>
        </authorList>
    </citation>
    <scope>NUCLEOTIDE SEQUENCE [LARGE SCALE MRNA]</scope>
    <source>
        <strain>cv. Nipponbare</strain>
    </source>
</reference>
<proteinExistence type="evidence at transcript level"/>
<comment type="function">
    <text>Tubulin is the major constituent of microtubules. The gamma chain is found at microtubule organizing centers (MTOC) such as the spindle poles, suggesting that it is involved in the minus-end nucleation of microtubule assembly.</text>
</comment>
<comment type="subcellular location">
    <subcellularLocation>
        <location evidence="1">Cytoplasm</location>
        <location evidence="1">Cytoskeleton</location>
        <location evidence="1">Microtubule organizing center</location>
    </subcellularLocation>
</comment>
<comment type="similarity">
    <text evidence="3">Belongs to the tubulin family.</text>
</comment>
<feature type="chain" id="PRO_0000048475" description="Tubulin gamma-2 chain">
    <location>
        <begin position="1"/>
        <end position="469"/>
    </location>
</feature>
<feature type="binding site" evidence="2">
    <location>
        <begin position="142"/>
        <end position="148"/>
    </location>
    <ligand>
        <name>GTP</name>
        <dbReference type="ChEBI" id="CHEBI:37565"/>
    </ligand>
</feature>